<gene>
    <name evidence="1" type="primary">ftsZ</name>
    <name type="ordered locus">SPD_1479</name>
</gene>
<accession>A0A0H2ZNE0</accession>
<keyword id="KW-0131">Cell cycle</keyword>
<keyword id="KW-0132">Cell division</keyword>
<keyword id="KW-0963">Cytoplasm</keyword>
<keyword id="KW-0342">GTP-binding</keyword>
<keyword id="KW-0547">Nucleotide-binding</keyword>
<keyword id="KW-1185">Reference proteome</keyword>
<keyword id="KW-0717">Septation</keyword>
<feature type="chain" id="PRO_0000454547" description="Cell division protein FtsZ">
    <location>
        <begin position="1"/>
        <end position="419"/>
    </location>
</feature>
<feature type="region of interest" description="Disordered" evidence="2">
    <location>
        <begin position="397"/>
        <end position="419"/>
    </location>
</feature>
<feature type="binding site" evidence="1">
    <location>
        <begin position="22"/>
        <end position="26"/>
    </location>
    <ligand>
        <name>GTP</name>
        <dbReference type="ChEBI" id="CHEBI:37565"/>
    </ligand>
</feature>
<feature type="binding site" evidence="1">
    <location>
        <begin position="109"/>
        <end position="111"/>
    </location>
    <ligand>
        <name>GTP</name>
        <dbReference type="ChEBI" id="CHEBI:37565"/>
    </ligand>
</feature>
<feature type="binding site" evidence="1">
    <location>
        <position position="140"/>
    </location>
    <ligand>
        <name>GTP</name>
        <dbReference type="ChEBI" id="CHEBI:37565"/>
    </ligand>
</feature>
<feature type="binding site" evidence="1">
    <location>
        <position position="144"/>
    </location>
    <ligand>
        <name>GTP</name>
        <dbReference type="ChEBI" id="CHEBI:37565"/>
    </ligand>
</feature>
<feature type="binding site" evidence="1">
    <location>
        <position position="188"/>
    </location>
    <ligand>
        <name>GTP</name>
        <dbReference type="ChEBI" id="CHEBI:37565"/>
    </ligand>
</feature>
<dbReference type="EMBL" id="CP000410">
    <property type="protein sequence ID" value="ABJ54579.1"/>
    <property type="molecule type" value="Genomic_DNA"/>
</dbReference>
<dbReference type="RefSeq" id="WP_000144280.1">
    <property type="nucleotide sequence ID" value="NZ_JAMLJR010000013.1"/>
</dbReference>
<dbReference type="SMR" id="A0A0H2ZNE0"/>
<dbReference type="PaxDb" id="373153-SPD_1479"/>
<dbReference type="GeneID" id="45653122"/>
<dbReference type="KEGG" id="spd:SPD_1479"/>
<dbReference type="eggNOG" id="COG0206">
    <property type="taxonomic scope" value="Bacteria"/>
</dbReference>
<dbReference type="HOGENOM" id="CLU_024865_1_2_9"/>
<dbReference type="BioCyc" id="SPNE373153:G1G6V-1595-MONOMER"/>
<dbReference type="Proteomes" id="UP000001452">
    <property type="component" value="Chromosome"/>
</dbReference>
<dbReference type="GO" id="GO:0032153">
    <property type="term" value="C:cell division site"/>
    <property type="evidence" value="ECO:0000314"/>
    <property type="project" value="UniProtKB"/>
</dbReference>
<dbReference type="GO" id="GO:0005737">
    <property type="term" value="C:cytoplasm"/>
    <property type="evidence" value="ECO:0000314"/>
    <property type="project" value="UniProtKB"/>
</dbReference>
<dbReference type="GO" id="GO:0005525">
    <property type="term" value="F:GTP binding"/>
    <property type="evidence" value="ECO:0007669"/>
    <property type="project" value="UniProtKB-UniRule"/>
</dbReference>
<dbReference type="GO" id="GO:0003924">
    <property type="term" value="F:GTPase activity"/>
    <property type="evidence" value="ECO:0007669"/>
    <property type="project" value="UniProtKB-UniRule"/>
</dbReference>
<dbReference type="GO" id="GO:0051301">
    <property type="term" value="P:cell division"/>
    <property type="evidence" value="ECO:0000314"/>
    <property type="project" value="UniProtKB"/>
</dbReference>
<dbReference type="GO" id="GO:0000917">
    <property type="term" value="P:division septum assembly"/>
    <property type="evidence" value="ECO:0007669"/>
    <property type="project" value="UniProtKB-KW"/>
</dbReference>
<dbReference type="GO" id="GO:0043093">
    <property type="term" value="P:FtsZ-dependent cytokinesis"/>
    <property type="evidence" value="ECO:0007669"/>
    <property type="project" value="UniProtKB-UniRule"/>
</dbReference>
<dbReference type="GO" id="GO:0051258">
    <property type="term" value="P:protein polymerization"/>
    <property type="evidence" value="ECO:0007669"/>
    <property type="project" value="UniProtKB-UniRule"/>
</dbReference>
<dbReference type="CDD" id="cd02201">
    <property type="entry name" value="FtsZ_type1"/>
    <property type="match status" value="1"/>
</dbReference>
<dbReference type="FunFam" id="3.30.1330.20:FF:000015">
    <property type="entry name" value="Cell division protein FtsZ"/>
    <property type="match status" value="1"/>
</dbReference>
<dbReference type="FunFam" id="3.40.50.1440:FF:000023">
    <property type="entry name" value="Cell division protein FtsZ"/>
    <property type="match status" value="1"/>
</dbReference>
<dbReference type="Gene3D" id="3.30.1330.20">
    <property type="entry name" value="Tubulin/FtsZ, C-terminal domain"/>
    <property type="match status" value="1"/>
</dbReference>
<dbReference type="Gene3D" id="3.40.50.1440">
    <property type="entry name" value="Tubulin/FtsZ, GTPase domain"/>
    <property type="match status" value="1"/>
</dbReference>
<dbReference type="HAMAP" id="MF_00909">
    <property type="entry name" value="FtsZ"/>
    <property type="match status" value="1"/>
</dbReference>
<dbReference type="InterPro" id="IPR000158">
    <property type="entry name" value="Cell_div_FtsZ"/>
</dbReference>
<dbReference type="InterPro" id="IPR020805">
    <property type="entry name" value="Cell_div_FtsZ_CS"/>
</dbReference>
<dbReference type="InterPro" id="IPR045061">
    <property type="entry name" value="FtsZ/CetZ"/>
</dbReference>
<dbReference type="InterPro" id="IPR024757">
    <property type="entry name" value="FtsZ_C"/>
</dbReference>
<dbReference type="InterPro" id="IPR008280">
    <property type="entry name" value="Tub_FtsZ_C"/>
</dbReference>
<dbReference type="InterPro" id="IPR037103">
    <property type="entry name" value="Tubulin/FtsZ-like_C"/>
</dbReference>
<dbReference type="InterPro" id="IPR018316">
    <property type="entry name" value="Tubulin/FtsZ_2-layer-sand-dom"/>
</dbReference>
<dbReference type="InterPro" id="IPR036525">
    <property type="entry name" value="Tubulin/FtsZ_GTPase_sf"/>
</dbReference>
<dbReference type="InterPro" id="IPR003008">
    <property type="entry name" value="Tubulin_FtsZ_GTPase"/>
</dbReference>
<dbReference type="NCBIfam" id="TIGR00065">
    <property type="entry name" value="ftsZ"/>
    <property type="match status" value="1"/>
</dbReference>
<dbReference type="PANTHER" id="PTHR30314">
    <property type="entry name" value="CELL DIVISION PROTEIN FTSZ-RELATED"/>
    <property type="match status" value="1"/>
</dbReference>
<dbReference type="PANTHER" id="PTHR30314:SF3">
    <property type="entry name" value="MITOCHONDRIAL DIVISION PROTEIN FSZA"/>
    <property type="match status" value="1"/>
</dbReference>
<dbReference type="Pfam" id="PF12327">
    <property type="entry name" value="FtsZ_C"/>
    <property type="match status" value="1"/>
</dbReference>
<dbReference type="Pfam" id="PF00091">
    <property type="entry name" value="Tubulin"/>
    <property type="match status" value="1"/>
</dbReference>
<dbReference type="PRINTS" id="PR00423">
    <property type="entry name" value="CELLDVISFTSZ"/>
</dbReference>
<dbReference type="SMART" id="SM00864">
    <property type="entry name" value="Tubulin"/>
    <property type="match status" value="1"/>
</dbReference>
<dbReference type="SMART" id="SM00865">
    <property type="entry name" value="Tubulin_C"/>
    <property type="match status" value="1"/>
</dbReference>
<dbReference type="SUPFAM" id="SSF55307">
    <property type="entry name" value="Tubulin C-terminal domain-like"/>
    <property type="match status" value="1"/>
</dbReference>
<dbReference type="SUPFAM" id="SSF52490">
    <property type="entry name" value="Tubulin nucleotide-binding domain-like"/>
    <property type="match status" value="1"/>
</dbReference>
<dbReference type="PROSITE" id="PS01134">
    <property type="entry name" value="FTSZ_1"/>
    <property type="match status" value="1"/>
</dbReference>
<organism>
    <name type="scientific">Streptococcus pneumoniae serotype 2 (strain D39 / NCTC 7466)</name>
    <dbReference type="NCBI Taxonomy" id="373153"/>
    <lineage>
        <taxon>Bacteria</taxon>
        <taxon>Bacillati</taxon>
        <taxon>Bacillota</taxon>
        <taxon>Bacilli</taxon>
        <taxon>Lactobacillales</taxon>
        <taxon>Streptococcaceae</taxon>
        <taxon>Streptococcus</taxon>
    </lineage>
</organism>
<protein>
    <recommendedName>
        <fullName evidence="1">Cell division protein FtsZ</fullName>
    </recommendedName>
</protein>
<sequence>MTFSFDTAAAQGAVIKVIGVGGGGGNAINRMVDEGVTGVEFIAANTDVQALSSTKAETVIQLGPKLTRGLGAGGQPEVGRKAAEESEETLTEAISGADMVFITAGMGGGSGTGAAPVIARIAKDLGALTVGVVTRPFGFEGSKRGQFAVEGINQLREHVDTLLIISNNNLLEIVDKKTPLLEALSEADNVLRQGVQGITDLITNPGLINLDFADVKTVMANKGNALMGIGIGSGEERVVEAARKAIYSPLLETTIDGAEDVIVNVTGGLDLTLIEAEEASQIVNQAAGQGVNIWLGTSIDESMRDEIRVTVVATGVRQDRVEKVVAPQARSATNYRETVKPAHSHGFDRHFDMAETVELPKQNPRRLEPTQASAFGDWDLRRESIVRTTDSVVSPVERFEAPISQDEDELDTPPFFKNR</sequence>
<comment type="function">
    <text evidence="1">Essential cell division protein that forms a contractile ring structure (Z ring) at the future cell division site. The regulation of the ring assembly controls the timing and the location of cell division. One of the functions of the FtsZ ring is to recruit other cell division proteins to the septum to produce a new cell wall between the dividing cells. Binds GTP and shows GTPase activity.</text>
</comment>
<comment type="subunit">
    <text evidence="1 4">Homodimer. Polymerizes to form a dynamic ring structure in a strictly GTP-dependent manner. Interacts directly with several other division proteins (By similarity). Interacts with CcrZ; the interaction is direct (PubMed:34373624).</text>
</comment>
<comment type="subcellular location">
    <subcellularLocation>
        <location evidence="1 4">Cytoplasm</location>
    </subcellularLocation>
    <text evidence="1 4">Assembles at midcell at the inner surface of the cytoplasmic membrane. Localizes at newly formed division sites. Colocalizes with CcrZ during the full cell cycle (PubMed:34373624).</text>
</comment>
<comment type="induction">
    <text evidence="3">Protein level is negatively regulated by KhpA/KhpB at the transcriptional level (at protein level).</text>
</comment>
<comment type="similarity">
    <text evidence="1">Belongs to the FtsZ family.</text>
</comment>
<name>FTSZ_STRP2</name>
<reference key="1">
    <citation type="journal article" date="2007" name="J. Bacteriol.">
        <title>Genome sequence of Avery's virulent serotype 2 strain D39 of Streptococcus pneumoniae and comparison with that of unencapsulated laboratory strain R6.</title>
        <authorList>
            <person name="Lanie J.A."/>
            <person name="Ng W.-L."/>
            <person name="Kazmierczak K.M."/>
            <person name="Andrzejewski T.M."/>
            <person name="Davidsen T.M."/>
            <person name="Wayne K.J."/>
            <person name="Tettelin H."/>
            <person name="Glass J.I."/>
            <person name="Winkler M.E."/>
        </authorList>
    </citation>
    <scope>NUCLEOTIDE SEQUENCE [LARGE SCALE GENOMIC DNA]</scope>
    <source>
        <strain>D39 / NCTC 7466</strain>
    </source>
</reference>
<reference key="2">
    <citation type="journal article" date="2017" name="Mol. Microbiol.">
        <title>Absence of the KhpA and KhpB (JAG/EloR) RNA-binding proteins suppresses the requirement for PBP2b by overproduction of FtsA in Streptococcus pneumoniae D39.</title>
        <authorList>
            <person name="Zheng J.J."/>
            <person name="Perez A.J."/>
            <person name="Tsui H.T."/>
            <person name="Massidda O."/>
            <person name="Winkler M.E."/>
        </authorList>
    </citation>
    <scope>FUNCTION</scope>
    <scope>INDUCTION</scope>
    <source>
        <strain>D39 / NCTC 7466</strain>
    </source>
</reference>
<reference key="3">
    <citation type="journal article" date="2021" name="Nat. Microbiol.">
        <title>CcrZ is a pneumococcal spatiotemporal cell cycle regulator that interacts with FtsZ and controls DNA replication by modulating the activity of DnaA.</title>
        <authorList>
            <person name="Gallay C."/>
            <person name="Sanselicio S."/>
            <person name="Anderson M.E."/>
            <person name="Soh Y.M."/>
            <person name="Liu X."/>
            <person name="Stamsaas G.A."/>
            <person name="Pelliciari S."/>
            <person name="van Raaphorst R."/>
            <person name="Denereaz J."/>
            <person name="Kjos M."/>
            <person name="Murray H."/>
            <person name="Gruber S."/>
            <person name="Grossman A.D."/>
            <person name="Veening J.W."/>
        </authorList>
    </citation>
    <scope>INTERACTION WITH CCRZ</scope>
    <scope>SUBCELLULAR LOCATION</scope>
    <source>
        <strain evidence="5">D39V / serotype 2</strain>
    </source>
</reference>
<evidence type="ECO:0000255" key="1">
    <source>
        <dbReference type="HAMAP-Rule" id="MF_00909"/>
    </source>
</evidence>
<evidence type="ECO:0000256" key="2">
    <source>
        <dbReference type="SAM" id="MobiDB-lite"/>
    </source>
</evidence>
<evidence type="ECO:0000269" key="3">
    <source>
    </source>
</evidence>
<evidence type="ECO:0000269" key="4">
    <source>
    </source>
</evidence>
<evidence type="ECO:0000303" key="5">
    <source>
    </source>
</evidence>
<proteinExistence type="evidence at protein level"/>